<sequence>MPRVKRGVTARARHKKIINLAKGYRGRRNNVYRIAKQAVMRAGQYAYRDRRNKKRVFRALWITRINAAVRQHDMTYSVFINGLKKASIELDRKVLADMAVFDKAAFAAIVKQVKAAVAA</sequence>
<reference key="1">
    <citation type="journal article" date="2010" name="Genome Biol. Evol.">
        <title>Continuing evolution of Burkholderia mallei through genome reduction and large-scale rearrangements.</title>
        <authorList>
            <person name="Losada L."/>
            <person name="Ronning C.M."/>
            <person name="DeShazer D."/>
            <person name="Woods D."/>
            <person name="Fedorova N."/>
            <person name="Kim H.S."/>
            <person name="Shabalina S.A."/>
            <person name="Pearson T.R."/>
            <person name="Brinkac L."/>
            <person name="Tan P."/>
            <person name="Nandi T."/>
            <person name="Crabtree J."/>
            <person name="Badger J."/>
            <person name="Beckstrom-Sternberg S."/>
            <person name="Saqib M."/>
            <person name="Schutzer S.E."/>
            <person name="Keim P."/>
            <person name="Nierman W.C."/>
        </authorList>
    </citation>
    <scope>NUCLEOTIDE SEQUENCE [LARGE SCALE GENOMIC DNA]</scope>
    <source>
        <strain>668</strain>
    </source>
</reference>
<dbReference type="EMBL" id="CP000570">
    <property type="protein sequence ID" value="ABN82010.1"/>
    <property type="molecule type" value="Genomic_DNA"/>
</dbReference>
<dbReference type="RefSeq" id="WP_004192938.1">
    <property type="nucleotide sequence ID" value="NC_009074.1"/>
</dbReference>
<dbReference type="SMR" id="A3N8T4"/>
<dbReference type="GeneID" id="98102114"/>
<dbReference type="KEGG" id="bpd:BURPS668_1715"/>
<dbReference type="HOGENOM" id="CLU_123265_0_1_4"/>
<dbReference type="GO" id="GO:1990904">
    <property type="term" value="C:ribonucleoprotein complex"/>
    <property type="evidence" value="ECO:0007669"/>
    <property type="project" value="UniProtKB-KW"/>
</dbReference>
<dbReference type="GO" id="GO:0005840">
    <property type="term" value="C:ribosome"/>
    <property type="evidence" value="ECO:0007669"/>
    <property type="project" value="UniProtKB-KW"/>
</dbReference>
<dbReference type="GO" id="GO:0019843">
    <property type="term" value="F:rRNA binding"/>
    <property type="evidence" value="ECO:0007669"/>
    <property type="project" value="UniProtKB-UniRule"/>
</dbReference>
<dbReference type="GO" id="GO:0003735">
    <property type="term" value="F:structural constituent of ribosome"/>
    <property type="evidence" value="ECO:0007669"/>
    <property type="project" value="InterPro"/>
</dbReference>
<dbReference type="GO" id="GO:0000027">
    <property type="term" value="P:ribosomal large subunit assembly"/>
    <property type="evidence" value="ECO:0007669"/>
    <property type="project" value="UniProtKB-UniRule"/>
</dbReference>
<dbReference type="GO" id="GO:0006412">
    <property type="term" value="P:translation"/>
    <property type="evidence" value="ECO:0007669"/>
    <property type="project" value="InterPro"/>
</dbReference>
<dbReference type="CDD" id="cd07026">
    <property type="entry name" value="Ribosomal_L20"/>
    <property type="match status" value="1"/>
</dbReference>
<dbReference type="FunFam" id="1.10.1900.20:FF:000001">
    <property type="entry name" value="50S ribosomal protein L20"/>
    <property type="match status" value="1"/>
</dbReference>
<dbReference type="Gene3D" id="6.10.160.10">
    <property type="match status" value="1"/>
</dbReference>
<dbReference type="Gene3D" id="1.10.1900.20">
    <property type="entry name" value="Ribosomal protein L20"/>
    <property type="match status" value="1"/>
</dbReference>
<dbReference type="HAMAP" id="MF_00382">
    <property type="entry name" value="Ribosomal_bL20"/>
    <property type="match status" value="1"/>
</dbReference>
<dbReference type="InterPro" id="IPR005813">
    <property type="entry name" value="Ribosomal_bL20"/>
</dbReference>
<dbReference type="InterPro" id="IPR049946">
    <property type="entry name" value="RIBOSOMAL_L20_CS"/>
</dbReference>
<dbReference type="InterPro" id="IPR035566">
    <property type="entry name" value="Ribosomal_protein_bL20_C"/>
</dbReference>
<dbReference type="NCBIfam" id="TIGR01032">
    <property type="entry name" value="rplT_bact"/>
    <property type="match status" value="1"/>
</dbReference>
<dbReference type="PANTHER" id="PTHR10986">
    <property type="entry name" value="39S RIBOSOMAL PROTEIN L20"/>
    <property type="match status" value="1"/>
</dbReference>
<dbReference type="Pfam" id="PF00453">
    <property type="entry name" value="Ribosomal_L20"/>
    <property type="match status" value="1"/>
</dbReference>
<dbReference type="PRINTS" id="PR00062">
    <property type="entry name" value="RIBOSOMALL20"/>
</dbReference>
<dbReference type="SUPFAM" id="SSF74731">
    <property type="entry name" value="Ribosomal protein L20"/>
    <property type="match status" value="1"/>
</dbReference>
<dbReference type="PROSITE" id="PS00937">
    <property type="entry name" value="RIBOSOMAL_L20"/>
    <property type="match status" value="1"/>
</dbReference>
<accession>A3N8T4</accession>
<evidence type="ECO:0000255" key="1">
    <source>
        <dbReference type="HAMAP-Rule" id="MF_00382"/>
    </source>
</evidence>
<evidence type="ECO:0000305" key="2"/>
<protein>
    <recommendedName>
        <fullName evidence="1">Large ribosomal subunit protein bL20</fullName>
    </recommendedName>
    <alternativeName>
        <fullName evidence="2">50S ribosomal protein L20</fullName>
    </alternativeName>
</protein>
<organism>
    <name type="scientific">Burkholderia pseudomallei (strain 668)</name>
    <dbReference type="NCBI Taxonomy" id="320373"/>
    <lineage>
        <taxon>Bacteria</taxon>
        <taxon>Pseudomonadati</taxon>
        <taxon>Pseudomonadota</taxon>
        <taxon>Betaproteobacteria</taxon>
        <taxon>Burkholderiales</taxon>
        <taxon>Burkholderiaceae</taxon>
        <taxon>Burkholderia</taxon>
        <taxon>pseudomallei group</taxon>
    </lineage>
</organism>
<feature type="chain" id="PRO_1000048943" description="Large ribosomal subunit protein bL20">
    <location>
        <begin position="1"/>
        <end position="119"/>
    </location>
</feature>
<gene>
    <name evidence="1" type="primary">rplT</name>
    <name type="ordered locus">BURPS668_1715</name>
</gene>
<proteinExistence type="inferred from homology"/>
<name>RL20_BURP6</name>
<comment type="function">
    <text evidence="1">Binds directly to 23S ribosomal RNA and is necessary for the in vitro assembly process of the 50S ribosomal subunit. It is not involved in the protein synthesizing functions of that subunit.</text>
</comment>
<comment type="similarity">
    <text evidence="1">Belongs to the bacterial ribosomal protein bL20 family.</text>
</comment>
<keyword id="KW-0687">Ribonucleoprotein</keyword>
<keyword id="KW-0689">Ribosomal protein</keyword>
<keyword id="KW-0694">RNA-binding</keyword>
<keyword id="KW-0699">rRNA-binding</keyword>